<dbReference type="EC" id="2.5.1.147" evidence="1"/>
<dbReference type="EMBL" id="CP000867">
    <property type="protein sequence ID" value="ABX01708.1"/>
    <property type="molecule type" value="Genomic_DNA"/>
</dbReference>
<dbReference type="SMR" id="A9A8N5"/>
<dbReference type="STRING" id="444158.MmarC6_0893"/>
<dbReference type="KEGG" id="mmx:MmarC6_0893"/>
<dbReference type="eggNOG" id="arCOG00656">
    <property type="taxonomic scope" value="Archaea"/>
</dbReference>
<dbReference type="HOGENOM" id="CLU_040406_1_0_2"/>
<dbReference type="OrthoDB" id="8186at2157"/>
<dbReference type="PhylomeDB" id="A9A8N5"/>
<dbReference type="UniPathway" id="UPA00072"/>
<dbReference type="GO" id="GO:0051539">
    <property type="term" value="F:4 iron, 4 sulfur cluster binding"/>
    <property type="evidence" value="ECO:0007669"/>
    <property type="project" value="UniProtKB-KW"/>
</dbReference>
<dbReference type="GO" id="GO:0141093">
    <property type="term" value="F:5-amino-6-(D-ribitylamino)uracil--L-tyrosine 4-hydroxyphenyl transferase activity"/>
    <property type="evidence" value="ECO:0007669"/>
    <property type="project" value="UniProtKB-EC"/>
</dbReference>
<dbReference type="GO" id="GO:0044689">
    <property type="term" value="F:7,8-didemethyl-8-hydroxy-5-deazariboflavin synthase activity"/>
    <property type="evidence" value="ECO:0007669"/>
    <property type="project" value="TreeGrafter"/>
</dbReference>
<dbReference type="GO" id="GO:0005506">
    <property type="term" value="F:iron ion binding"/>
    <property type="evidence" value="ECO:0007669"/>
    <property type="project" value="UniProtKB-UniRule"/>
</dbReference>
<dbReference type="CDD" id="cd01335">
    <property type="entry name" value="Radical_SAM"/>
    <property type="match status" value="1"/>
</dbReference>
<dbReference type="FunFam" id="3.20.20.70:FF:000134">
    <property type="entry name" value="7,8-didemethyl-8-hydroxy-5-deazariboflavin synthase"/>
    <property type="match status" value="1"/>
</dbReference>
<dbReference type="Gene3D" id="3.20.20.70">
    <property type="entry name" value="Aldolase class I"/>
    <property type="match status" value="1"/>
</dbReference>
<dbReference type="HAMAP" id="MF_01612">
    <property type="entry name" value="FO_synth_sub2"/>
    <property type="match status" value="1"/>
</dbReference>
<dbReference type="InterPro" id="IPR013785">
    <property type="entry name" value="Aldolase_TIM"/>
</dbReference>
<dbReference type="InterPro" id="IPR045567">
    <property type="entry name" value="CofH/MnqC-like_C"/>
</dbReference>
<dbReference type="InterPro" id="IPR019940">
    <property type="entry name" value="CofH_family"/>
</dbReference>
<dbReference type="InterPro" id="IPR006638">
    <property type="entry name" value="Elp3/MiaA/NifB-like_rSAM"/>
</dbReference>
<dbReference type="InterPro" id="IPR034405">
    <property type="entry name" value="F420"/>
</dbReference>
<dbReference type="InterPro" id="IPR020050">
    <property type="entry name" value="FO_synthase_su2"/>
</dbReference>
<dbReference type="InterPro" id="IPR007197">
    <property type="entry name" value="rSAM"/>
</dbReference>
<dbReference type="NCBIfam" id="TIGR00423">
    <property type="entry name" value="CofH family radical SAM protein"/>
    <property type="match status" value="1"/>
</dbReference>
<dbReference type="NCBIfam" id="TIGR03551">
    <property type="entry name" value="F420_cofH"/>
    <property type="match status" value="1"/>
</dbReference>
<dbReference type="NCBIfam" id="NF005609">
    <property type="entry name" value="PRK07360.1"/>
    <property type="match status" value="1"/>
</dbReference>
<dbReference type="PANTHER" id="PTHR43076">
    <property type="entry name" value="FO SYNTHASE (COFH)"/>
    <property type="match status" value="1"/>
</dbReference>
<dbReference type="PANTHER" id="PTHR43076:SF1">
    <property type="entry name" value="LIPOYL SYNTHASE 2"/>
    <property type="match status" value="1"/>
</dbReference>
<dbReference type="Pfam" id="PF19288">
    <property type="entry name" value="CofH_C"/>
    <property type="match status" value="1"/>
</dbReference>
<dbReference type="Pfam" id="PF04055">
    <property type="entry name" value="Radical_SAM"/>
    <property type="match status" value="1"/>
</dbReference>
<dbReference type="PIRSF" id="PIRSF004762">
    <property type="entry name" value="CHP00423"/>
    <property type="match status" value="1"/>
</dbReference>
<dbReference type="SFLD" id="SFLDF00293">
    <property type="entry name" value="((2_3_4_5-tetrahydroxypentyl)a"/>
    <property type="match status" value="1"/>
</dbReference>
<dbReference type="SFLD" id="SFLDG01388">
    <property type="entry name" value="7_8-didemethyl-8-hydroxy-5-dea"/>
    <property type="match status" value="1"/>
</dbReference>
<dbReference type="SFLD" id="SFLDF00343">
    <property type="entry name" value="aminofutalosine_synthase_(mqnE"/>
    <property type="match status" value="1"/>
</dbReference>
<dbReference type="SMART" id="SM00729">
    <property type="entry name" value="Elp3"/>
    <property type="match status" value="1"/>
</dbReference>
<dbReference type="SUPFAM" id="SSF102114">
    <property type="entry name" value="Radical SAM enzymes"/>
    <property type="match status" value="1"/>
</dbReference>
<dbReference type="PROSITE" id="PS51918">
    <property type="entry name" value="RADICAL_SAM"/>
    <property type="match status" value="1"/>
</dbReference>
<protein>
    <recommendedName>
        <fullName evidence="1">5-amino-6-(D-ribitylamino)uracil--L-tyrosine 4-hydroxyphenyl transferase</fullName>
        <ecNumber evidence="1">2.5.1.147</ecNumber>
    </recommendedName>
    <alternativeName>
        <fullName evidence="1">FO synthase subunit 2</fullName>
    </alternativeName>
</protein>
<organism>
    <name type="scientific">Methanococcus maripaludis (strain C6 / ATCC BAA-1332)</name>
    <dbReference type="NCBI Taxonomy" id="444158"/>
    <lineage>
        <taxon>Archaea</taxon>
        <taxon>Methanobacteriati</taxon>
        <taxon>Methanobacteriota</taxon>
        <taxon>Methanomada group</taxon>
        <taxon>Methanococci</taxon>
        <taxon>Methanococcales</taxon>
        <taxon>Methanococcaceae</taxon>
        <taxon>Methanococcus</taxon>
    </lineage>
</organism>
<keyword id="KW-0004">4Fe-4S</keyword>
<keyword id="KW-0408">Iron</keyword>
<keyword id="KW-0411">Iron-sulfur</keyword>
<keyword id="KW-0479">Metal-binding</keyword>
<keyword id="KW-0949">S-adenosyl-L-methionine</keyword>
<keyword id="KW-0808">Transferase</keyword>
<comment type="function">
    <text evidence="1">Catalyzes the radical-mediated synthesis of 5-amino-5-(4-hydroxybenzyl)-6-(D-ribitylimino)-5,6-dihydrouracil from 5-amino-6-(D-ribitylamino)uracil and L-tyrosine.</text>
</comment>
<comment type="catalytic activity">
    <reaction evidence="1">
        <text>5-amino-6-(D-ribitylamino)uracil + L-tyrosine + S-adenosyl-L-methionine = 5-amino-5-(4-hydroxybenzyl)-6-(D-ribitylimino)-5,6-dihydrouracil + 2-iminoacetate + 5'-deoxyadenosine + L-methionine + H(+)</text>
        <dbReference type="Rhea" id="RHEA:55200"/>
        <dbReference type="ChEBI" id="CHEBI:15378"/>
        <dbReference type="ChEBI" id="CHEBI:15934"/>
        <dbReference type="ChEBI" id="CHEBI:17319"/>
        <dbReference type="ChEBI" id="CHEBI:57844"/>
        <dbReference type="ChEBI" id="CHEBI:58315"/>
        <dbReference type="ChEBI" id="CHEBI:59789"/>
        <dbReference type="ChEBI" id="CHEBI:77846"/>
        <dbReference type="ChEBI" id="CHEBI:85936"/>
        <dbReference type="EC" id="2.5.1.147"/>
    </reaction>
</comment>
<comment type="cofactor">
    <cofactor evidence="1">
        <name>[4Fe-4S] cluster</name>
        <dbReference type="ChEBI" id="CHEBI:49883"/>
    </cofactor>
    <text evidence="1">Binds 1 [4Fe-4S] cluster. The cluster is coordinated with 3 cysteines and an exchangeable S-adenosyl-L-methionine.</text>
</comment>
<comment type="pathway">
    <text evidence="1">Cofactor biosynthesis; coenzyme F0 biosynthesis.</text>
</comment>
<comment type="subunit">
    <text evidence="1">Consists of two subunits, CofG and CofH.</text>
</comment>
<comment type="similarity">
    <text evidence="1">Belongs to the radical SAM superfamily. CofH family.</text>
</comment>
<name>COFH_METM6</name>
<sequence length="359" mass="39762">MDLMSFKEKEISKKECLELFEDTENFFDVIKLADSLRKDIVGDTVTYVVNANINFTNICSGTCGFCAFKAEPDDSNAFFLNPNEVAKKALEAKKTGATEVCIQGGLLKEIDTHFQAEILKKVKEITESFGKIDVHAFSPMEVKSAAENAGLSVKEALKILKENGLNSMPGTAAEILNDKIRSEICPTKLKTSEWIDVVTNAHKTGIKTTCTMMYGHIEENKHLAEHLSILRKIQKETGGFTEFVPLTFLHENAPLYHLDRVKNGASGMLDLKTYAVSRIFFKDCIKNIQTSWVKLGTKLSQVSLNCGANDIGGTLMEESISKAAGGSYGTYMSEEKLKDMILAVGRTPKQRNTAYEIIE</sequence>
<feature type="chain" id="PRO_1000215708" description="5-amino-6-(D-ribitylamino)uracil--L-tyrosine 4-hydroxyphenyl transferase">
    <location>
        <begin position="1"/>
        <end position="359"/>
    </location>
</feature>
<feature type="domain" description="Radical SAM core" evidence="2">
    <location>
        <begin position="45"/>
        <end position="282"/>
    </location>
</feature>
<feature type="binding site" evidence="1">
    <location>
        <position position="59"/>
    </location>
    <ligand>
        <name>[4Fe-4S] cluster</name>
        <dbReference type="ChEBI" id="CHEBI:49883"/>
        <note>4Fe-4S-S-AdoMet</note>
    </ligand>
</feature>
<feature type="binding site" evidence="1">
    <location>
        <position position="63"/>
    </location>
    <ligand>
        <name>[4Fe-4S] cluster</name>
        <dbReference type="ChEBI" id="CHEBI:49883"/>
        <note>4Fe-4S-S-AdoMet</note>
    </ligand>
</feature>
<feature type="binding site" evidence="1">
    <location>
        <position position="66"/>
    </location>
    <ligand>
        <name>[4Fe-4S] cluster</name>
        <dbReference type="ChEBI" id="CHEBI:49883"/>
        <note>4Fe-4S-S-AdoMet</note>
    </ligand>
</feature>
<proteinExistence type="inferred from homology"/>
<reference key="1">
    <citation type="submission" date="2007-10" db="EMBL/GenBank/DDBJ databases">
        <title>Complete sequence of Methanococcus maripaludis C6.</title>
        <authorList>
            <consortium name="US DOE Joint Genome Institute"/>
            <person name="Copeland A."/>
            <person name="Lucas S."/>
            <person name="Lapidus A."/>
            <person name="Barry K."/>
            <person name="Glavina del Rio T."/>
            <person name="Dalin E."/>
            <person name="Tice H."/>
            <person name="Pitluck S."/>
            <person name="Clum A."/>
            <person name="Schmutz J."/>
            <person name="Larimer F."/>
            <person name="Land M."/>
            <person name="Hauser L."/>
            <person name="Kyrpides N."/>
            <person name="Mikhailova N."/>
            <person name="Sieprawska-Lupa M."/>
            <person name="Whitman W.B."/>
            <person name="Richardson P."/>
        </authorList>
    </citation>
    <scope>NUCLEOTIDE SEQUENCE [LARGE SCALE GENOMIC DNA]</scope>
    <source>
        <strain>C6 / ATCC BAA-1332</strain>
    </source>
</reference>
<evidence type="ECO:0000255" key="1">
    <source>
        <dbReference type="HAMAP-Rule" id="MF_01612"/>
    </source>
</evidence>
<evidence type="ECO:0000255" key="2">
    <source>
        <dbReference type="PROSITE-ProRule" id="PRU01266"/>
    </source>
</evidence>
<accession>A9A8N5</accession>
<gene>
    <name evidence="1" type="primary">cofH</name>
    <name type="ordered locus">MmarC6_0893</name>
</gene>